<accession>A5ELL0</accession>
<sequence>MAGERERGGRDRKEREERDSEFVDKLVHINRVAKVVKGGKRFGFAALVVIGDQKGRVGFGHGKAREVPEAIRKATDSAKRNLTRVALREGRTLHHDIFGRHGAGRVYLRAAPAGTGIIAGGPMRAVFETLGIQDVVAKSIGSSNPYNMVRATFNALKHQDSPRSVAARRNIKVSTLQARRVGGDAEAAAD</sequence>
<organism>
    <name type="scientific">Bradyrhizobium sp. (strain BTAi1 / ATCC BAA-1182)</name>
    <dbReference type="NCBI Taxonomy" id="288000"/>
    <lineage>
        <taxon>Bacteria</taxon>
        <taxon>Pseudomonadati</taxon>
        <taxon>Pseudomonadota</taxon>
        <taxon>Alphaproteobacteria</taxon>
        <taxon>Hyphomicrobiales</taxon>
        <taxon>Nitrobacteraceae</taxon>
        <taxon>Bradyrhizobium</taxon>
    </lineage>
</organism>
<proteinExistence type="inferred from homology"/>
<dbReference type="EMBL" id="CP000494">
    <property type="protein sequence ID" value="ABQ37054.1"/>
    <property type="molecule type" value="Genomic_DNA"/>
</dbReference>
<dbReference type="RefSeq" id="WP_006611855.1">
    <property type="nucleotide sequence ID" value="NC_009485.1"/>
</dbReference>
<dbReference type="SMR" id="A5ELL0"/>
<dbReference type="STRING" id="288000.BBta_5053"/>
<dbReference type="KEGG" id="bbt:BBta_5053"/>
<dbReference type="eggNOG" id="COG0098">
    <property type="taxonomic scope" value="Bacteria"/>
</dbReference>
<dbReference type="HOGENOM" id="CLU_065898_2_2_5"/>
<dbReference type="OrthoDB" id="9809045at2"/>
<dbReference type="Proteomes" id="UP000000246">
    <property type="component" value="Chromosome"/>
</dbReference>
<dbReference type="GO" id="GO:0015935">
    <property type="term" value="C:small ribosomal subunit"/>
    <property type="evidence" value="ECO:0007669"/>
    <property type="project" value="InterPro"/>
</dbReference>
<dbReference type="GO" id="GO:0019843">
    <property type="term" value="F:rRNA binding"/>
    <property type="evidence" value="ECO:0007669"/>
    <property type="project" value="UniProtKB-UniRule"/>
</dbReference>
<dbReference type="GO" id="GO:0003735">
    <property type="term" value="F:structural constituent of ribosome"/>
    <property type="evidence" value="ECO:0007669"/>
    <property type="project" value="InterPro"/>
</dbReference>
<dbReference type="GO" id="GO:0006412">
    <property type="term" value="P:translation"/>
    <property type="evidence" value="ECO:0007669"/>
    <property type="project" value="UniProtKB-UniRule"/>
</dbReference>
<dbReference type="FunFam" id="3.30.160.20:FF:000001">
    <property type="entry name" value="30S ribosomal protein S5"/>
    <property type="match status" value="1"/>
</dbReference>
<dbReference type="FunFam" id="3.30.230.10:FF:000002">
    <property type="entry name" value="30S ribosomal protein S5"/>
    <property type="match status" value="1"/>
</dbReference>
<dbReference type="Gene3D" id="3.30.160.20">
    <property type="match status" value="1"/>
</dbReference>
<dbReference type="Gene3D" id="3.30.230.10">
    <property type="match status" value="1"/>
</dbReference>
<dbReference type="HAMAP" id="MF_01307_B">
    <property type="entry name" value="Ribosomal_uS5_B"/>
    <property type="match status" value="1"/>
</dbReference>
<dbReference type="InterPro" id="IPR020568">
    <property type="entry name" value="Ribosomal_Su5_D2-typ_SF"/>
</dbReference>
<dbReference type="InterPro" id="IPR000851">
    <property type="entry name" value="Ribosomal_uS5"/>
</dbReference>
<dbReference type="InterPro" id="IPR005712">
    <property type="entry name" value="Ribosomal_uS5_bac-type"/>
</dbReference>
<dbReference type="InterPro" id="IPR005324">
    <property type="entry name" value="Ribosomal_uS5_C"/>
</dbReference>
<dbReference type="InterPro" id="IPR013810">
    <property type="entry name" value="Ribosomal_uS5_N"/>
</dbReference>
<dbReference type="InterPro" id="IPR018192">
    <property type="entry name" value="Ribosomal_uS5_N_CS"/>
</dbReference>
<dbReference type="InterPro" id="IPR014721">
    <property type="entry name" value="Ribsml_uS5_D2-typ_fold_subgr"/>
</dbReference>
<dbReference type="NCBIfam" id="TIGR01021">
    <property type="entry name" value="rpsE_bact"/>
    <property type="match status" value="1"/>
</dbReference>
<dbReference type="PANTHER" id="PTHR48277">
    <property type="entry name" value="MITOCHONDRIAL RIBOSOMAL PROTEIN S5"/>
    <property type="match status" value="1"/>
</dbReference>
<dbReference type="PANTHER" id="PTHR48277:SF1">
    <property type="entry name" value="MITOCHONDRIAL RIBOSOMAL PROTEIN S5"/>
    <property type="match status" value="1"/>
</dbReference>
<dbReference type="Pfam" id="PF00333">
    <property type="entry name" value="Ribosomal_S5"/>
    <property type="match status" value="1"/>
</dbReference>
<dbReference type="Pfam" id="PF03719">
    <property type="entry name" value="Ribosomal_S5_C"/>
    <property type="match status" value="1"/>
</dbReference>
<dbReference type="SUPFAM" id="SSF54768">
    <property type="entry name" value="dsRNA-binding domain-like"/>
    <property type="match status" value="1"/>
</dbReference>
<dbReference type="SUPFAM" id="SSF54211">
    <property type="entry name" value="Ribosomal protein S5 domain 2-like"/>
    <property type="match status" value="1"/>
</dbReference>
<dbReference type="PROSITE" id="PS00585">
    <property type="entry name" value="RIBOSOMAL_S5"/>
    <property type="match status" value="1"/>
</dbReference>
<dbReference type="PROSITE" id="PS50881">
    <property type="entry name" value="S5_DSRBD"/>
    <property type="match status" value="1"/>
</dbReference>
<protein>
    <recommendedName>
        <fullName evidence="1">Small ribosomal subunit protein uS5</fullName>
    </recommendedName>
    <alternativeName>
        <fullName evidence="2">30S ribosomal protein S5</fullName>
    </alternativeName>
</protein>
<comment type="function">
    <text evidence="1">With S4 and S12 plays an important role in translational accuracy.</text>
</comment>
<comment type="function">
    <text evidence="1">Located at the back of the 30S subunit body where it stabilizes the conformation of the head with respect to the body.</text>
</comment>
<comment type="subunit">
    <text evidence="1">Part of the 30S ribosomal subunit. Contacts proteins S4 and S8.</text>
</comment>
<comment type="domain">
    <text>The N-terminal domain interacts with the head of the 30S subunit; the C-terminal domain interacts with the body and contacts protein S4. The interaction surface between S4 and S5 is involved in control of translational fidelity.</text>
</comment>
<comment type="similarity">
    <text evidence="1">Belongs to the universal ribosomal protein uS5 family.</text>
</comment>
<reference key="1">
    <citation type="journal article" date="2007" name="Science">
        <title>Legumes symbioses: absence of nod genes in photosynthetic bradyrhizobia.</title>
        <authorList>
            <person name="Giraud E."/>
            <person name="Moulin L."/>
            <person name="Vallenet D."/>
            <person name="Barbe V."/>
            <person name="Cytryn E."/>
            <person name="Avarre J.-C."/>
            <person name="Jaubert M."/>
            <person name="Simon D."/>
            <person name="Cartieaux F."/>
            <person name="Prin Y."/>
            <person name="Bena G."/>
            <person name="Hannibal L."/>
            <person name="Fardoux J."/>
            <person name="Kojadinovic M."/>
            <person name="Vuillet L."/>
            <person name="Lajus A."/>
            <person name="Cruveiller S."/>
            <person name="Rouy Z."/>
            <person name="Mangenot S."/>
            <person name="Segurens B."/>
            <person name="Dossat C."/>
            <person name="Franck W.L."/>
            <person name="Chang W.-S."/>
            <person name="Saunders E."/>
            <person name="Bruce D."/>
            <person name="Richardson P."/>
            <person name="Normand P."/>
            <person name="Dreyfus B."/>
            <person name="Pignol D."/>
            <person name="Stacey G."/>
            <person name="Emerich D."/>
            <person name="Vermeglio A."/>
            <person name="Medigue C."/>
            <person name="Sadowsky M."/>
        </authorList>
    </citation>
    <scope>NUCLEOTIDE SEQUENCE [LARGE SCALE GENOMIC DNA]</scope>
    <source>
        <strain>BTAi1 / ATCC BAA-1182</strain>
    </source>
</reference>
<feature type="chain" id="PRO_0000323080" description="Small ribosomal subunit protein uS5">
    <location>
        <begin position="1"/>
        <end position="190"/>
    </location>
</feature>
<feature type="domain" description="S5 DRBM" evidence="1">
    <location>
        <begin position="22"/>
        <end position="85"/>
    </location>
</feature>
<gene>
    <name evidence="1" type="primary">rpsE</name>
    <name type="ordered locus">BBta_5053</name>
</gene>
<name>RS5_BRASB</name>
<keyword id="KW-1185">Reference proteome</keyword>
<keyword id="KW-0687">Ribonucleoprotein</keyword>
<keyword id="KW-0689">Ribosomal protein</keyword>
<keyword id="KW-0694">RNA-binding</keyword>
<keyword id="KW-0699">rRNA-binding</keyword>
<evidence type="ECO:0000255" key="1">
    <source>
        <dbReference type="HAMAP-Rule" id="MF_01307"/>
    </source>
</evidence>
<evidence type="ECO:0000305" key="2"/>